<feature type="chain" id="PRO_1000205014" description="Signal recognition particle 54 kDa protein">
    <location>
        <begin position="1"/>
        <end position="447"/>
    </location>
</feature>
<feature type="binding site" evidence="1">
    <location>
        <begin position="103"/>
        <end position="110"/>
    </location>
    <ligand>
        <name>GTP</name>
        <dbReference type="ChEBI" id="CHEBI:37565"/>
    </ligand>
</feature>
<feature type="binding site" evidence="1">
    <location>
        <begin position="185"/>
        <end position="189"/>
    </location>
    <ligand>
        <name>GTP</name>
        <dbReference type="ChEBI" id="CHEBI:37565"/>
    </ligand>
</feature>
<feature type="binding site" evidence="1">
    <location>
        <begin position="245"/>
        <end position="248"/>
    </location>
    <ligand>
        <name>GTP</name>
        <dbReference type="ChEBI" id="CHEBI:37565"/>
    </ligand>
</feature>
<dbReference type="EC" id="3.6.5.4" evidence="1"/>
<dbReference type="EMBL" id="CP001400">
    <property type="protein sequence ID" value="ACP38007.1"/>
    <property type="molecule type" value="Genomic_DNA"/>
</dbReference>
<dbReference type="RefSeq" id="WP_012711260.1">
    <property type="nucleotide sequence ID" value="NC_012588.1"/>
</dbReference>
<dbReference type="SMR" id="C3MYM8"/>
<dbReference type="KEGG" id="sia:M1425_1252"/>
<dbReference type="HOGENOM" id="CLU_009301_6_0_2"/>
<dbReference type="Proteomes" id="UP000001350">
    <property type="component" value="Chromosome"/>
</dbReference>
<dbReference type="GO" id="GO:0048500">
    <property type="term" value="C:signal recognition particle"/>
    <property type="evidence" value="ECO:0007669"/>
    <property type="project" value="UniProtKB-UniRule"/>
</dbReference>
<dbReference type="GO" id="GO:0008312">
    <property type="term" value="F:7S RNA binding"/>
    <property type="evidence" value="ECO:0007669"/>
    <property type="project" value="UniProtKB-UniRule"/>
</dbReference>
<dbReference type="GO" id="GO:0016887">
    <property type="term" value="F:ATP hydrolysis activity"/>
    <property type="evidence" value="ECO:0007669"/>
    <property type="project" value="InterPro"/>
</dbReference>
<dbReference type="GO" id="GO:0005525">
    <property type="term" value="F:GTP binding"/>
    <property type="evidence" value="ECO:0007669"/>
    <property type="project" value="UniProtKB-UniRule"/>
</dbReference>
<dbReference type="GO" id="GO:0003924">
    <property type="term" value="F:GTPase activity"/>
    <property type="evidence" value="ECO:0007669"/>
    <property type="project" value="UniProtKB-UniRule"/>
</dbReference>
<dbReference type="GO" id="GO:0006614">
    <property type="term" value="P:SRP-dependent cotranslational protein targeting to membrane"/>
    <property type="evidence" value="ECO:0007669"/>
    <property type="project" value="InterPro"/>
</dbReference>
<dbReference type="CDD" id="cd17875">
    <property type="entry name" value="SRP54_G"/>
    <property type="match status" value="1"/>
</dbReference>
<dbReference type="FunFam" id="3.40.50.300:FF:000022">
    <property type="entry name" value="Signal recognition particle 54 kDa subunit"/>
    <property type="match status" value="1"/>
</dbReference>
<dbReference type="Gene3D" id="3.40.50.300">
    <property type="entry name" value="P-loop containing nucleotide triphosphate hydrolases"/>
    <property type="match status" value="1"/>
</dbReference>
<dbReference type="Gene3D" id="1.20.120.140">
    <property type="entry name" value="Signal recognition particle SRP54, nucleotide-binding domain"/>
    <property type="match status" value="1"/>
</dbReference>
<dbReference type="Gene3D" id="1.10.260.30">
    <property type="entry name" value="Signal recognition particle, SRP54 subunit, M-domain"/>
    <property type="match status" value="1"/>
</dbReference>
<dbReference type="HAMAP" id="MF_00306">
    <property type="entry name" value="SRP54"/>
    <property type="match status" value="1"/>
</dbReference>
<dbReference type="InterPro" id="IPR003593">
    <property type="entry name" value="AAA+_ATPase"/>
</dbReference>
<dbReference type="InterPro" id="IPR027417">
    <property type="entry name" value="P-loop_NTPase"/>
</dbReference>
<dbReference type="InterPro" id="IPR036891">
    <property type="entry name" value="Signal_recog_part_SRP54_M_sf"/>
</dbReference>
<dbReference type="InterPro" id="IPR013822">
    <property type="entry name" value="Signal_recog_particl_SRP54_hlx"/>
</dbReference>
<dbReference type="InterPro" id="IPR004125">
    <property type="entry name" value="Signal_recog_particle_SRP54_M"/>
</dbReference>
<dbReference type="InterPro" id="IPR036225">
    <property type="entry name" value="SRP/SRP_N"/>
</dbReference>
<dbReference type="InterPro" id="IPR022941">
    <property type="entry name" value="SRP54"/>
</dbReference>
<dbReference type="InterPro" id="IPR000897">
    <property type="entry name" value="SRP54_GTPase_dom"/>
</dbReference>
<dbReference type="InterPro" id="IPR042101">
    <property type="entry name" value="SRP54_N_sf"/>
</dbReference>
<dbReference type="PANTHER" id="PTHR11564">
    <property type="entry name" value="SIGNAL RECOGNITION PARTICLE 54K PROTEIN SRP54"/>
    <property type="match status" value="1"/>
</dbReference>
<dbReference type="PANTHER" id="PTHR11564:SF5">
    <property type="entry name" value="SIGNAL RECOGNITION PARTICLE SUBUNIT SRP54"/>
    <property type="match status" value="1"/>
</dbReference>
<dbReference type="Pfam" id="PF00448">
    <property type="entry name" value="SRP54"/>
    <property type="match status" value="1"/>
</dbReference>
<dbReference type="Pfam" id="PF02881">
    <property type="entry name" value="SRP54_N"/>
    <property type="match status" value="1"/>
</dbReference>
<dbReference type="Pfam" id="PF02978">
    <property type="entry name" value="SRP_SPB"/>
    <property type="match status" value="1"/>
</dbReference>
<dbReference type="SMART" id="SM00382">
    <property type="entry name" value="AAA"/>
    <property type="match status" value="1"/>
</dbReference>
<dbReference type="SMART" id="SM00962">
    <property type="entry name" value="SRP54"/>
    <property type="match status" value="1"/>
</dbReference>
<dbReference type="SMART" id="SM00963">
    <property type="entry name" value="SRP54_N"/>
    <property type="match status" value="1"/>
</dbReference>
<dbReference type="SUPFAM" id="SSF47364">
    <property type="entry name" value="Domain of the SRP/SRP receptor G-proteins"/>
    <property type="match status" value="1"/>
</dbReference>
<dbReference type="SUPFAM" id="SSF52540">
    <property type="entry name" value="P-loop containing nucleoside triphosphate hydrolases"/>
    <property type="match status" value="1"/>
</dbReference>
<dbReference type="SUPFAM" id="SSF47446">
    <property type="entry name" value="Signal peptide-binding domain"/>
    <property type="match status" value="1"/>
</dbReference>
<comment type="function">
    <text evidence="1">Involved in targeting and insertion of nascent membrane proteins into the cytoplasmic membrane. Binds to the hydrophobic signal sequence of the ribosome-nascent chain (RNC) as it emerges from the ribosomes. The SRP-RNC complex is then targeted to the cytoplasmic membrane where it interacts with the SRP receptor FtsY.</text>
</comment>
<comment type="catalytic activity">
    <reaction evidence="1">
        <text>GTP + H2O = GDP + phosphate + H(+)</text>
        <dbReference type="Rhea" id="RHEA:19669"/>
        <dbReference type="ChEBI" id="CHEBI:15377"/>
        <dbReference type="ChEBI" id="CHEBI:15378"/>
        <dbReference type="ChEBI" id="CHEBI:37565"/>
        <dbReference type="ChEBI" id="CHEBI:43474"/>
        <dbReference type="ChEBI" id="CHEBI:58189"/>
        <dbReference type="EC" id="3.6.5.4"/>
    </reaction>
</comment>
<comment type="subunit">
    <text evidence="1">Part of the signal recognition particle protein translocation system, which is composed of SRP and FtsY. Archaeal SRP consists of a 7S RNA molecule of 300 nucleotides and two protein subunits: SRP54 and SRP19.</text>
</comment>
<comment type="subcellular location">
    <subcellularLocation>
        <location evidence="1">Cytoplasm</location>
    </subcellularLocation>
    <text evidence="1">The SRP-RNC complex is targeted to the cytoplasmic membrane.</text>
</comment>
<comment type="domain">
    <text evidence="1">Composed of three domains: the N-terminal N domain, which is responsible for interactions with the ribosome, the central G domain, which binds GTP, and the C-terminal M domain, which binds the RNA and the signal sequence of the RNC.</text>
</comment>
<comment type="similarity">
    <text evidence="1">Belongs to the GTP-binding SRP family. SRP54 subfamily.</text>
</comment>
<proteinExistence type="inferred from homology"/>
<reference key="1">
    <citation type="journal article" date="2009" name="Proc. Natl. Acad. Sci. U.S.A.">
        <title>Biogeography of the Sulfolobus islandicus pan-genome.</title>
        <authorList>
            <person name="Reno M.L."/>
            <person name="Held N.L."/>
            <person name="Fields C.J."/>
            <person name="Burke P.V."/>
            <person name="Whitaker R.J."/>
        </authorList>
    </citation>
    <scope>NUCLEOTIDE SEQUENCE [LARGE SCALE GENOMIC DNA]</scope>
    <source>
        <strain>M.14.25 / Kamchatka #1</strain>
    </source>
</reference>
<name>SRP54_SACI4</name>
<protein>
    <recommendedName>
        <fullName evidence="1">Signal recognition particle 54 kDa protein</fullName>
        <shortName evidence="1">SRP54</shortName>
        <ecNumber evidence="1">3.6.5.4</ecNumber>
    </recommendedName>
</protein>
<organism>
    <name type="scientific">Saccharolobus islandicus (strain M.14.25 / Kamchatka #1)</name>
    <name type="common">Sulfolobus islandicus</name>
    <dbReference type="NCBI Taxonomy" id="427317"/>
    <lineage>
        <taxon>Archaea</taxon>
        <taxon>Thermoproteota</taxon>
        <taxon>Thermoprotei</taxon>
        <taxon>Sulfolobales</taxon>
        <taxon>Sulfolobaceae</taxon>
        <taxon>Saccharolobus</taxon>
    </lineage>
</organism>
<keyword id="KW-0963">Cytoplasm</keyword>
<keyword id="KW-0342">GTP-binding</keyword>
<keyword id="KW-0378">Hydrolase</keyword>
<keyword id="KW-0547">Nucleotide-binding</keyword>
<keyword id="KW-0687">Ribonucleoprotein</keyword>
<keyword id="KW-0694">RNA-binding</keyword>
<keyword id="KW-0733">Signal recognition particle</keyword>
<gene>
    <name evidence="1" type="primary">srp54</name>
    <name type="ordered locus">M1425_1252</name>
</gene>
<evidence type="ECO:0000255" key="1">
    <source>
        <dbReference type="HAMAP-Rule" id="MF_00306"/>
    </source>
</evidence>
<sequence length="447" mass="49926">MLENIRDAVRKFLTGSTPYEKAVDEFVKELQKSLISSDVNVKLVFSLTAKIKERLNKEKPPSVLERKEWFISIVYDELSKLFGGDKEPNVNPTKLPFIIMLVGVQGSGKTTTSGKLAYFYKRRGYKVGLVAADVYRPAAYDQLLQLGNQIGVPVYGEPNNQNAIEIAKKGVDTFVKNKMDIIIVDTAGRHGYGEETKLLEEMKEIYEALKPDDVILVIDASIGQKAYDLASRFHQASPIGSIIITKMDGTAKGGGALSAVAATGATIKFIGTGEKIDELEIFNAKRYVSRILGMGDIESILEKVKGLEEYEKIQKKMEDVMEGKGKLTLRDVYAQIMALRKMGPLSKVLQHIPGLGVMLPTPSEDQLKLGEEKIRRWLAALNSMTYKELENPSIIDKSRMRRIAEGSGLEVEDVRELLEWYNNMNKLLKMVKRRRGSIDKLFGGKIG</sequence>
<accession>C3MYM8</accession>